<sequence length="172" mass="19356">MAEKRNIFLVGPMGAGKSTIGRYLAQQLHMEFLDSDTVIEERTGADISWVFDVEGEEGFRKREEAVINDLTLEQGIVLATGGGSVKSRENRNRLSARGIVVYLETTIEKQLARTNRDKKRPLLQTDNPREVLESLAGERNPLYEEIADYTVRTDDQSAKVVANQIVKMLEES</sequence>
<dbReference type="EC" id="2.7.1.71" evidence="1"/>
<dbReference type="EMBL" id="BA000037">
    <property type="protein sequence ID" value="BAC95753.1"/>
    <property type="molecule type" value="Genomic_DNA"/>
</dbReference>
<dbReference type="RefSeq" id="WP_011079357.1">
    <property type="nucleotide sequence ID" value="NC_005139.1"/>
</dbReference>
<dbReference type="SMR" id="Q7MH83"/>
<dbReference type="STRING" id="672.VV93_v1c27180"/>
<dbReference type="GeneID" id="93895646"/>
<dbReference type="KEGG" id="vvy:VV2989"/>
<dbReference type="eggNOG" id="COG0703">
    <property type="taxonomic scope" value="Bacteria"/>
</dbReference>
<dbReference type="HOGENOM" id="CLU_057607_2_2_6"/>
<dbReference type="UniPathway" id="UPA00053">
    <property type="reaction ID" value="UER00088"/>
</dbReference>
<dbReference type="Proteomes" id="UP000002675">
    <property type="component" value="Chromosome I"/>
</dbReference>
<dbReference type="GO" id="GO:0005829">
    <property type="term" value="C:cytosol"/>
    <property type="evidence" value="ECO:0007669"/>
    <property type="project" value="TreeGrafter"/>
</dbReference>
<dbReference type="GO" id="GO:0005524">
    <property type="term" value="F:ATP binding"/>
    <property type="evidence" value="ECO:0007669"/>
    <property type="project" value="UniProtKB-UniRule"/>
</dbReference>
<dbReference type="GO" id="GO:0000287">
    <property type="term" value="F:magnesium ion binding"/>
    <property type="evidence" value="ECO:0007669"/>
    <property type="project" value="UniProtKB-UniRule"/>
</dbReference>
<dbReference type="GO" id="GO:0004765">
    <property type="term" value="F:shikimate kinase activity"/>
    <property type="evidence" value="ECO:0007669"/>
    <property type="project" value="UniProtKB-UniRule"/>
</dbReference>
<dbReference type="GO" id="GO:0008652">
    <property type="term" value="P:amino acid biosynthetic process"/>
    <property type="evidence" value="ECO:0007669"/>
    <property type="project" value="UniProtKB-KW"/>
</dbReference>
<dbReference type="GO" id="GO:0009073">
    <property type="term" value="P:aromatic amino acid family biosynthetic process"/>
    <property type="evidence" value="ECO:0007669"/>
    <property type="project" value="UniProtKB-KW"/>
</dbReference>
<dbReference type="GO" id="GO:0009423">
    <property type="term" value="P:chorismate biosynthetic process"/>
    <property type="evidence" value="ECO:0007669"/>
    <property type="project" value="UniProtKB-UniRule"/>
</dbReference>
<dbReference type="CDD" id="cd00464">
    <property type="entry name" value="SK"/>
    <property type="match status" value="1"/>
</dbReference>
<dbReference type="FunFam" id="3.40.50.300:FF:000099">
    <property type="entry name" value="Shikimate kinase 1"/>
    <property type="match status" value="1"/>
</dbReference>
<dbReference type="Gene3D" id="3.40.50.300">
    <property type="entry name" value="P-loop containing nucleotide triphosphate hydrolases"/>
    <property type="match status" value="1"/>
</dbReference>
<dbReference type="HAMAP" id="MF_00109">
    <property type="entry name" value="Shikimate_kinase"/>
    <property type="match status" value="1"/>
</dbReference>
<dbReference type="InterPro" id="IPR027417">
    <property type="entry name" value="P-loop_NTPase"/>
</dbReference>
<dbReference type="InterPro" id="IPR031322">
    <property type="entry name" value="Shikimate/glucono_kinase"/>
</dbReference>
<dbReference type="InterPro" id="IPR000623">
    <property type="entry name" value="Shikimate_kinase/TSH1"/>
</dbReference>
<dbReference type="InterPro" id="IPR023000">
    <property type="entry name" value="Shikimate_kinase_CS"/>
</dbReference>
<dbReference type="NCBIfam" id="NF003456">
    <property type="entry name" value="PRK05057.1"/>
    <property type="match status" value="1"/>
</dbReference>
<dbReference type="PANTHER" id="PTHR21087">
    <property type="entry name" value="SHIKIMATE KINASE"/>
    <property type="match status" value="1"/>
</dbReference>
<dbReference type="PANTHER" id="PTHR21087:SF16">
    <property type="entry name" value="SHIKIMATE KINASE 1, CHLOROPLASTIC"/>
    <property type="match status" value="1"/>
</dbReference>
<dbReference type="Pfam" id="PF01202">
    <property type="entry name" value="SKI"/>
    <property type="match status" value="1"/>
</dbReference>
<dbReference type="PRINTS" id="PR01100">
    <property type="entry name" value="SHIKIMTKNASE"/>
</dbReference>
<dbReference type="SUPFAM" id="SSF52540">
    <property type="entry name" value="P-loop containing nucleoside triphosphate hydrolases"/>
    <property type="match status" value="1"/>
</dbReference>
<dbReference type="PROSITE" id="PS01128">
    <property type="entry name" value="SHIKIMATE_KINASE"/>
    <property type="match status" value="1"/>
</dbReference>
<keyword id="KW-0028">Amino-acid biosynthesis</keyword>
<keyword id="KW-0057">Aromatic amino acid biosynthesis</keyword>
<keyword id="KW-0067">ATP-binding</keyword>
<keyword id="KW-0963">Cytoplasm</keyword>
<keyword id="KW-0418">Kinase</keyword>
<keyword id="KW-0460">Magnesium</keyword>
<keyword id="KW-0479">Metal-binding</keyword>
<keyword id="KW-0547">Nucleotide-binding</keyword>
<keyword id="KW-0808">Transferase</keyword>
<organism>
    <name type="scientific">Vibrio vulnificus (strain YJ016)</name>
    <dbReference type="NCBI Taxonomy" id="196600"/>
    <lineage>
        <taxon>Bacteria</taxon>
        <taxon>Pseudomonadati</taxon>
        <taxon>Pseudomonadota</taxon>
        <taxon>Gammaproteobacteria</taxon>
        <taxon>Vibrionales</taxon>
        <taxon>Vibrionaceae</taxon>
        <taxon>Vibrio</taxon>
    </lineage>
</organism>
<gene>
    <name evidence="1" type="primary">aroK</name>
    <name type="ordered locus">VV2989</name>
</gene>
<evidence type="ECO:0000255" key="1">
    <source>
        <dbReference type="HAMAP-Rule" id="MF_00109"/>
    </source>
</evidence>
<protein>
    <recommendedName>
        <fullName evidence="1">Shikimate kinase</fullName>
        <shortName evidence="1">SK</shortName>
        <ecNumber evidence="1">2.7.1.71</ecNumber>
    </recommendedName>
</protein>
<comment type="function">
    <text evidence="1">Catalyzes the specific phosphorylation of the 3-hydroxyl group of shikimic acid using ATP as a cosubstrate.</text>
</comment>
<comment type="catalytic activity">
    <reaction evidence="1">
        <text>shikimate + ATP = 3-phosphoshikimate + ADP + H(+)</text>
        <dbReference type="Rhea" id="RHEA:13121"/>
        <dbReference type="ChEBI" id="CHEBI:15378"/>
        <dbReference type="ChEBI" id="CHEBI:30616"/>
        <dbReference type="ChEBI" id="CHEBI:36208"/>
        <dbReference type="ChEBI" id="CHEBI:145989"/>
        <dbReference type="ChEBI" id="CHEBI:456216"/>
        <dbReference type="EC" id="2.7.1.71"/>
    </reaction>
</comment>
<comment type="cofactor">
    <cofactor evidence="1">
        <name>Mg(2+)</name>
        <dbReference type="ChEBI" id="CHEBI:18420"/>
    </cofactor>
    <text evidence="1">Binds 1 Mg(2+) ion per subunit.</text>
</comment>
<comment type="pathway">
    <text evidence="1">Metabolic intermediate biosynthesis; chorismate biosynthesis; chorismate from D-erythrose 4-phosphate and phosphoenolpyruvate: step 5/7.</text>
</comment>
<comment type="subunit">
    <text evidence="1">Monomer.</text>
</comment>
<comment type="subcellular location">
    <subcellularLocation>
        <location evidence="1">Cytoplasm</location>
    </subcellularLocation>
</comment>
<comment type="similarity">
    <text evidence="1">Belongs to the shikimate kinase family.</text>
</comment>
<feature type="chain" id="PRO_0000192425" description="Shikimate kinase">
    <location>
        <begin position="1"/>
        <end position="172"/>
    </location>
</feature>
<feature type="binding site" evidence="1">
    <location>
        <begin position="14"/>
        <end position="19"/>
    </location>
    <ligand>
        <name>ATP</name>
        <dbReference type="ChEBI" id="CHEBI:30616"/>
    </ligand>
</feature>
<feature type="binding site" evidence="1">
    <location>
        <position position="18"/>
    </location>
    <ligand>
        <name>Mg(2+)</name>
        <dbReference type="ChEBI" id="CHEBI:18420"/>
    </ligand>
</feature>
<feature type="binding site" evidence="1">
    <location>
        <position position="36"/>
    </location>
    <ligand>
        <name>substrate</name>
    </ligand>
</feature>
<feature type="binding site" evidence="1">
    <location>
        <position position="60"/>
    </location>
    <ligand>
        <name>substrate</name>
    </ligand>
</feature>
<feature type="binding site" evidence="1">
    <location>
        <position position="82"/>
    </location>
    <ligand>
        <name>substrate</name>
    </ligand>
</feature>
<feature type="binding site" evidence="1">
    <location>
        <position position="120"/>
    </location>
    <ligand>
        <name>ATP</name>
        <dbReference type="ChEBI" id="CHEBI:30616"/>
    </ligand>
</feature>
<feature type="binding site" evidence="1">
    <location>
        <position position="139"/>
    </location>
    <ligand>
        <name>substrate</name>
    </ligand>
</feature>
<feature type="binding site" evidence="1">
    <location>
        <position position="156"/>
    </location>
    <ligand>
        <name>ATP</name>
        <dbReference type="ChEBI" id="CHEBI:30616"/>
    </ligand>
</feature>
<name>AROK_VIBVY</name>
<reference key="1">
    <citation type="journal article" date="2003" name="Genome Res.">
        <title>Comparative genome analysis of Vibrio vulnificus, a marine pathogen.</title>
        <authorList>
            <person name="Chen C.-Y."/>
            <person name="Wu K.-M."/>
            <person name="Chang Y.-C."/>
            <person name="Chang C.-H."/>
            <person name="Tsai H.-C."/>
            <person name="Liao T.-L."/>
            <person name="Liu Y.-M."/>
            <person name="Chen H.-J."/>
            <person name="Shen A.B.-T."/>
            <person name="Li J.-C."/>
            <person name="Su T.-L."/>
            <person name="Shao C.-P."/>
            <person name="Lee C.-T."/>
            <person name="Hor L.-I."/>
            <person name="Tsai S.-F."/>
        </authorList>
    </citation>
    <scope>NUCLEOTIDE SEQUENCE [LARGE SCALE GENOMIC DNA]</scope>
    <source>
        <strain>YJ016</strain>
    </source>
</reference>
<proteinExistence type="inferred from homology"/>
<accession>Q7MH83</accession>